<dbReference type="EC" id="2.7.4.25" evidence="1"/>
<dbReference type="EMBL" id="CP000964">
    <property type="protein sequence ID" value="ACI10680.1"/>
    <property type="molecule type" value="Genomic_DNA"/>
</dbReference>
<dbReference type="SMR" id="B5XY86"/>
<dbReference type="KEGG" id="kpe:KPK_3622"/>
<dbReference type="HOGENOM" id="CLU_079959_0_2_6"/>
<dbReference type="Proteomes" id="UP000001734">
    <property type="component" value="Chromosome"/>
</dbReference>
<dbReference type="GO" id="GO:0005829">
    <property type="term" value="C:cytosol"/>
    <property type="evidence" value="ECO:0007669"/>
    <property type="project" value="TreeGrafter"/>
</dbReference>
<dbReference type="GO" id="GO:0005524">
    <property type="term" value="F:ATP binding"/>
    <property type="evidence" value="ECO:0007669"/>
    <property type="project" value="UniProtKB-UniRule"/>
</dbReference>
<dbReference type="GO" id="GO:0036430">
    <property type="term" value="F:CMP kinase activity"/>
    <property type="evidence" value="ECO:0007669"/>
    <property type="project" value="RHEA"/>
</dbReference>
<dbReference type="GO" id="GO:0036431">
    <property type="term" value="F:dCMP kinase activity"/>
    <property type="evidence" value="ECO:0007669"/>
    <property type="project" value="RHEA"/>
</dbReference>
<dbReference type="GO" id="GO:0015949">
    <property type="term" value="P:nucleobase-containing small molecule interconversion"/>
    <property type="evidence" value="ECO:0007669"/>
    <property type="project" value="TreeGrafter"/>
</dbReference>
<dbReference type="GO" id="GO:0006220">
    <property type="term" value="P:pyrimidine nucleotide metabolic process"/>
    <property type="evidence" value="ECO:0007669"/>
    <property type="project" value="UniProtKB-UniRule"/>
</dbReference>
<dbReference type="CDD" id="cd02020">
    <property type="entry name" value="CMPK"/>
    <property type="match status" value="1"/>
</dbReference>
<dbReference type="FunFam" id="3.40.50.300:FF:000262">
    <property type="entry name" value="Cytidylate kinase"/>
    <property type="match status" value="1"/>
</dbReference>
<dbReference type="Gene3D" id="3.40.50.300">
    <property type="entry name" value="P-loop containing nucleotide triphosphate hydrolases"/>
    <property type="match status" value="1"/>
</dbReference>
<dbReference type="HAMAP" id="MF_00238">
    <property type="entry name" value="Cytidyl_kinase_type1"/>
    <property type="match status" value="1"/>
</dbReference>
<dbReference type="InterPro" id="IPR003136">
    <property type="entry name" value="Cytidylate_kin"/>
</dbReference>
<dbReference type="InterPro" id="IPR011994">
    <property type="entry name" value="Cytidylate_kinase_dom"/>
</dbReference>
<dbReference type="InterPro" id="IPR027417">
    <property type="entry name" value="P-loop_NTPase"/>
</dbReference>
<dbReference type="NCBIfam" id="TIGR00017">
    <property type="entry name" value="cmk"/>
    <property type="match status" value="1"/>
</dbReference>
<dbReference type="PANTHER" id="PTHR21299:SF2">
    <property type="entry name" value="CYTIDYLATE KINASE"/>
    <property type="match status" value="1"/>
</dbReference>
<dbReference type="PANTHER" id="PTHR21299">
    <property type="entry name" value="CYTIDYLATE KINASE/PANTOATE-BETA-ALANINE LIGASE"/>
    <property type="match status" value="1"/>
</dbReference>
<dbReference type="Pfam" id="PF02224">
    <property type="entry name" value="Cytidylate_kin"/>
    <property type="match status" value="1"/>
</dbReference>
<dbReference type="SUPFAM" id="SSF52540">
    <property type="entry name" value="P-loop containing nucleoside triphosphate hydrolases"/>
    <property type="match status" value="1"/>
</dbReference>
<keyword id="KW-0067">ATP-binding</keyword>
<keyword id="KW-0963">Cytoplasm</keyword>
<keyword id="KW-0418">Kinase</keyword>
<keyword id="KW-0547">Nucleotide-binding</keyword>
<keyword id="KW-0808">Transferase</keyword>
<gene>
    <name evidence="1" type="primary">cmk</name>
    <name type="ordered locus">KPK_3622</name>
</gene>
<protein>
    <recommendedName>
        <fullName evidence="1">Cytidylate kinase</fullName>
        <shortName evidence="1">CK</shortName>
        <ecNumber evidence="1">2.7.4.25</ecNumber>
    </recommendedName>
    <alternativeName>
        <fullName evidence="1">Cytidine monophosphate kinase</fullName>
        <shortName evidence="1">CMP kinase</shortName>
    </alternativeName>
</protein>
<sequence>MTANIPVITIDGPGGAGKGTLCKAMAEALGWHLLDSGAIYRVLALAALHHHVDVESEEALVPLAAHLDVRFISTDGTLEVVLEGEDVSGEIRTQEVANAASKVAAFPRVREALLRRQRAFRELPGLIADGRDMGTVVFPDAPVKIFLDASADERAHRRMRQLQEKGFDVNFERLLSEIKERDDRDRNRAVAPLVPAADALVLDSTELNIEQVIEKALQYAREKLAVA</sequence>
<feature type="chain" id="PRO_1000100666" description="Cytidylate kinase">
    <location>
        <begin position="1"/>
        <end position="227"/>
    </location>
</feature>
<feature type="binding site" evidence="1">
    <location>
        <begin position="12"/>
        <end position="20"/>
    </location>
    <ligand>
        <name>ATP</name>
        <dbReference type="ChEBI" id="CHEBI:30616"/>
    </ligand>
</feature>
<comment type="catalytic activity">
    <reaction evidence="1">
        <text>CMP + ATP = CDP + ADP</text>
        <dbReference type="Rhea" id="RHEA:11600"/>
        <dbReference type="ChEBI" id="CHEBI:30616"/>
        <dbReference type="ChEBI" id="CHEBI:58069"/>
        <dbReference type="ChEBI" id="CHEBI:60377"/>
        <dbReference type="ChEBI" id="CHEBI:456216"/>
        <dbReference type="EC" id="2.7.4.25"/>
    </reaction>
</comment>
<comment type="catalytic activity">
    <reaction evidence="1">
        <text>dCMP + ATP = dCDP + ADP</text>
        <dbReference type="Rhea" id="RHEA:25094"/>
        <dbReference type="ChEBI" id="CHEBI:30616"/>
        <dbReference type="ChEBI" id="CHEBI:57566"/>
        <dbReference type="ChEBI" id="CHEBI:58593"/>
        <dbReference type="ChEBI" id="CHEBI:456216"/>
        <dbReference type="EC" id="2.7.4.25"/>
    </reaction>
</comment>
<comment type="subcellular location">
    <subcellularLocation>
        <location evidence="1">Cytoplasm</location>
    </subcellularLocation>
</comment>
<comment type="similarity">
    <text evidence="1">Belongs to the cytidylate kinase family. Type 1 subfamily.</text>
</comment>
<evidence type="ECO:0000255" key="1">
    <source>
        <dbReference type="HAMAP-Rule" id="MF_00238"/>
    </source>
</evidence>
<organism>
    <name type="scientific">Klebsiella pneumoniae (strain 342)</name>
    <dbReference type="NCBI Taxonomy" id="507522"/>
    <lineage>
        <taxon>Bacteria</taxon>
        <taxon>Pseudomonadati</taxon>
        <taxon>Pseudomonadota</taxon>
        <taxon>Gammaproteobacteria</taxon>
        <taxon>Enterobacterales</taxon>
        <taxon>Enterobacteriaceae</taxon>
        <taxon>Klebsiella/Raoultella group</taxon>
        <taxon>Klebsiella</taxon>
        <taxon>Klebsiella pneumoniae complex</taxon>
    </lineage>
</organism>
<name>KCY_KLEP3</name>
<accession>B5XY86</accession>
<reference key="1">
    <citation type="journal article" date="2008" name="PLoS Genet.">
        <title>Complete genome sequence of the N2-fixing broad host range endophyte Klebsiella pneumoniae 342 and virulence predictions verified in mice.</title>
        <authorList>
            <person name="Fouts D.E."/>
            <person name="Tyler H.L."/>
            <person name="DeBoy R.T."/>
            <person name="Daugherty S."/>
            <person name="Ren Q."/>
            <person name="Badger J.H."/>
            <person name="Durkin A.S."/>
            <person name="Huot H."/>
            <person name="Shrivastava S."/>
            <person name="Kothari S."/>
            <person name="Dodson R.J."/>
            <person name="Mohamoud Y."/>
            <person name="Khouri H."/>
            <person name="Roesch L.F.W."/>
            <person name="Krogfelt K.A."/>
            <person name="Struve C."/>
            <person name="Triplett E.W."/>
            <person name="Methe B.A."/>
        </authorList>
    </citation>
    <scope>NUCLEOTIDE SEQUENCE [LARGE SCALE GENOMIC DNA]</scope>
    <source>
        <strain>342</strain>
    </source>
</reference>
<proteinExistence type="inferred from homology"/>